<proteinExistence type="inferred from homology"/>
<dbReference type="EC" id="3.5.1.-" evidence="1"/>
<dbReference type="EMBL" id="AE007869">
    <property type="protein sequence ID" value="AAK88229.2"/>
    <property type="molecule type" value="Genomic_DNA"/>
</dbReference>
<dbReference type="RefSeq" id="NP_355444.2">
    <property type="nucleotide sequence ID" value="NC_003062.2"/>
</dbReference>
<dbReference type="SMR" id="Q7CWX3"/>
<dbReference type="STRING" id="176299.Atu2497"/>
<dbReference type="ESTHER" id="agrtu-ATU2497">
    <property type="family name" value="RutD"/>
</dbReference>
<dbReference type="EnsemblBacteria" id="AAK88229">
    <property type="protein sequence ID" value="AAK88229"/>
    <property type="gene ID" value="Atu2497"/>
</dbReference>
<dbReference type="KEGG" id="atu:Atu2497"/>
<dbReference type="PATRIC" id="fig|176299.10.peg.2509"/>
<dbReference type="eggNOG" id="COG2267">
    <property type="taxonomic scope" value="Bacteria"/>
</dbReference>
<dbReference type="HOGENOM" id="CLU_020336_50_1_5"/>
<dbReference type="OrthoDB" id="9796770at2"/>
<dbReference type="PhylomeDB" id="Q7CWX3"/>
<dbReference type="Proteomes" id="UP000000813">
    <property type="component" value="Chromosome circular"/>
</dbReference>
<dbReference type="GO" id="GO:0016811">
    <property type="term" value="F:hydrolase activity, acting on carbon-nitrogen (but not peptide) bonds, in linear amides"/>
    <property type="evidence" value="ECO:0007669"/>
    <property type="project" value="InterPro"/>
</dbReference>
<dbReference type="GO" id="GO:0019740">
    <property type="term" value="P:nitrogen utilization"/>
    <property type="evidence" value="ECO:0007669"/>
    <property type="project" value="UniProtKB-UniRule"/>
</dbReference>
<dbReference type="GO" id="GO:0006212">
    <property type="term" value="P:uracil catabolic process"/>
    <property type="evidence" value="ECO:0007669"/>
    <property type="project" value="UniProtKB-UniRule"/>
</dbReference>
<dbReference type="Gene3D" id="3.40.50.1820">
    <property type="entry name" value="alpha/beta hydrolase"/>
    <property type="match status" value="1"/>
</dbReference>
<dbReference type="HAMAP" id="MF_00832">
    <property type="entry name" value="RutD"/>
    <property type="match status" value="1"/>
</dbReference>
<dbReference type="InterPro" id="IPR050471">
    <property type="entry name" value="AB_hydrolase"/>
</dbReference>
<dbReference type="InterPro" id="IPR000073">
    <property type="entry name" value="AB_hydrolase_1"/>
</dbReference>
<dbReference type="InterPro" id="IPR029058">
    <property type="entry name" value="AB_hydrolase_fold"/>
</dbReference>
<dbReference type="InterPro" id="IPR019913">
    <property type="entry name" value="Pyrimidine_utilisation_RutD"/>
</dbReference>
<dbReference type="NCBIfam" id="TIGR03611">
    <property type="entry name" value="RutD"/>
    <property type="match status" value="1"/>
</dbReference>
<dbReference type="PANTHER" id="PTHR43433:SF10">
    <property type="entry name" value="AB HYDROLASE-1 DOMAIN-CONTAINING PROTEIN"/>
    <property type="match status" value="1"/>
</dbReference>
<dbReference type="PANTHER" id="PTHR43433">
    <property type="entry name" value="HYDROLASE, ALPHA/BETA FOLD FAMILY PROTEIN"/>
    <property type="match status" value="1"/>
</dbReference>
<dbReference type="Pfam" id="PF00561">
    <property type="entry name" value="Abhydrolase_1"/>
    <property type="match status" value="1"/>
</dbReference>
<dbReference type="PRINTS" id="PR00111">
    <property type="entry name" value="ABHYDROLASE"/>
</dbReference>
<dbReference type="SUPFAM" id="SSF53474">
    <property type="entry name" value="alpha/beta-Hydrolases"/>
    <property type="match status" value="1"/>
</dbReference>
<evidence type="ECO:0000255" key="1">
    <source>
        <dbReference type="HAMAP-Rule" id="MF_00832"/>
    </source>
</evidence>
<reference key="1">
    <citation type="journal article" date="2001" name="Science">
        <title>The genome of the natural genetic engineer Agrobacterium tumefaciens C58.</title>
        <authorList>
            <person name="Wood D.W."/>
            <person name="Setubal J.C."/>
            <person name="Kaul R."/>
            <person name="Monks D.E."/>
            <person name="Kitajima J.P."/>
            <person name="Okura V.K."/>
            <person name="Zhou Y."/>
            <person name="Chen L."/>
            <person name="Wood G.E."/>
            <person name="Almeida N.F. Jr."/>
            <person name="Woo L."/>
            <person name="Chen Y."/>
            <person name="Paulsen I.T."/>
            <person name="Eisen J.A."/>
            <person name="Karp P.D."/>
            <person name="Bovee D. Sr."/>
            <person name="Chapman P."/>
            <person name="Clendenning J."/>
            <person name="Deatherage G."/>
            <person name="Gillet W."/>
            <person name="Grant C."/>
            <person name="Kutyavin T."/>
            <person name="Levy R."/>
            <person name="Li M.-J."/>
            <person name="McClelland E."/>
            <person name="Palmieri A."/>
            <person name="Raymond C."/>
            <person name="Rouse G."/>
            <person name="Saenphimmachak C."/>
            <person name="Wu Z."/>
            <person name="Romero P."/>
            <person name="Gordon D."/>
            <person name="Zhang S."/>
            <person name="Yoo H."/>
            <person name="Tao Y."/>
            <person name="Biddle P."/>
            <person name="Jung M."/>
            <person name="Krespan W."/>
            <person name="Perry M."/>
            <person name="Gordon-Kamm B."/>
            <person name="Liao L."/>
            <person name="Kim S."/>
            <person name="Hendrick C."/>
            <person name="Zhao Z.-Y."/>
            <person name="Dolan M."/>
            <person name="Chumley F."/>
            <person name="Tingey S.V."/>
            <person name="Tomb J.-F."/>
            <person name="Gordon M.P."/>
            <person name="Olson M.V."/>
            <person name="Nester E.W."/>
        </authorList>
    </citation>
    <scope>NUCLEOTIDE SEQUENCE [LARGE SCALE GENOMIC DNA]</scope>
    <source>
        <strain>C58 / ATCC 33970</strain>
    </source>
</reference>
<reference key="2">
    <citation type="journal article" date="2001" name="Science">
        <title>Genome sequence of the plant pathogen and biotechnology agent Agrobacterium tumefaciens C58.</title>
        <authorList>
            <person name="Goodner B."/>
            <person name="Hinkle G."/>
            <person name="Gattung S."/>
            <person name="Miller N."/>
            <person name="Blanchard M."/>
            <person name="Qurollo B."/>
            <person name="Goldman B.S."/>
            <person name="Cao Y."/>
            <person name="Askenazi M."/>
            <person name="Halling C."/>
            <person name="Mullin L."/>
            <person name="Houmiel K."/>
            <person name="Gordon J."/>
            <person name="Vaudin M."/>
            <person name="Iartchouk O."/>
            <person name="Epp A."/>
            <person name="Liu F."/>
            <person name="Wollam C."/>
            <person name="Allinger M."/>
            <person name="Doughty D."/>
            <person name="Scott C."/>
            <person name="Lappas C."/>
            <person name="Markelz B."/>
            <person name="Flanagan C."/>
            <person name="Crowell C."/>
            <person name="Gurson J."/>
            <person name="Lomo C."/>
            <person name="Sear C."/>
            <person name="Strub G."/>
            <person name="Cielo C."/>
            <person name="Slater S."/>
        </authorList>
    </citation>
    <scope>NUCLEOTIDE SEQUENCE [LARGE SCALE GENOMIC DNA]</scope>
    <source>
        <strain>C58 / ATCC 33970</strain>
    </source>
</reference>
<keyword id="KW-0378">Hydrolase</keyword>
<keyword id="KW-1185">Reference proteome</keyword>
<feature type="chain" id="PRO_0000402925" description="Putative carbamate hydrolase RutD">
    <location>
        <begin position="1"/>
        <end position="261"/>
    </location>
</feature>
<feature type="domain" description="AB hydrolase-1" evidence="1">
    <location>
        <begin position="14"/>
        <end position="119"/>
    </location>
</feature>
<sequence length="261" mass="28691">MHFEVHGRTDAEAPTILLSSGLGGSSAYWLPQIEALSDHFRIVTYDHRGTGRTGGEVPTEGGISAMADDVLEIVSALNLEKFHFMGHALGGLIGLDIALRQPRLIDRLVLINAWSKADPHSGRCFDVRIELLEKSGVDAFVKAQPLFLYPAAWMSEHQERLARDDAHGVAHFQGKTNVLRRIAALRAFDIDARLGEIGNPVLVVATKDDLLVPYTRSLRLAEGLPQSELCLLDFGAHAVNITEPDLFNTRLLQFLLPADQT</sequence>
<gene>
    <name evidence="1" type="primary">rutD</name>
    <name type="ordered locus">Atu2497</name>
    <name type="ORF">AGR_C_4537</name>
</gene>
<accession>Q7CWX3</accession>
<organism>
    <name type="scientific">Agrobacterium fabrum (strain C58 / ATCC 33970)</name>
    <name type="common">Agrobacterium tumefaciens (strain C58)</name>
    <dbReference type="NCBI Taxonomy" id="176299"/>
    <lineage>
        <taxon>Bacteria</taxon>
        <taxon>Pseudomonadati</taxon>
        <taxon>Pseudomonadota</taxon>
        <taxon>Alphaproteobacteria</taxon>
        <taxon>Hyphomicrobiales</taxon>
        <taxon>Rhizobiaceae</taxon>
        <taxon>Rhizobium/Agrobacterium group</taxon>
        <taxon>Agrobacterium</taxon>
        <taxon>Agrobacterium tumefaciens complex</taxon>
    </lineage>
</organism>
<comment type="function">
    <text evidence="1">Involved in pyrimidine catabolism. May facilitate the hydrolysis of carbamate, a reaction that can also occur spontaneously.</text>
</comment>
<comment type="catalytic activity">
    <reaction evidence="1">
        <text>carbamate + 2 H(+) = NH4(+) + CO2</text>
        <dbReference type="Rhea" id="RHEA:15649"/>
        <dbReference type="ChEBI" id="CHEBI:13941"/>
        <dbReference type="ChEBI" id="CHEBI:15378"/>
        <dbReference type="ChEBI" id="CHEBI:16526"/>
        <dbReference type="ChEBI" id="CHEBI:28938"/>
    </reaction>
</comment>
<comment type="similarity">
    <text evidence="1">Belongs to the AB hydrolase superfamily. Hydrolase RutD family.</text>
</comment>
<name>RUTD_AGRFC</name>
<protein>
    <recommendedName>
        <fullName evidence="1">Putative carbamate hydrolase RutD</fullName>
        <ecNumber evidence="1">3.5.1.-</ecNumber>
    </recommendedName>
    <alternativeName>
        <fullName evidence="1">Aminohydrolase</fullName>
    </alternativeName>
</protein>